<comment type="similarity">
    <text evidence="1">Belongs to the UPF0162 family.</text>
</comment>
<dbReference type="EMBL" id="AE016826">
    <property type="protein sequence ID" value="AAO26896.1"/>
    <property type="molecule type" value="Genomic_DNA"/>
</dbReference>
<dbReference type="RefSeq" id="WP_011091297.1">
    <property type="nucleotide sequence ID" value="NC_004545.1"/>
</dbReference>
<dbReference type="SMR" id="Q89AS9"/>
<dbReference type="STRING" id="224915.bbp_163"/>
<dbReference type="KEGG" id="bab:bbp_163"/>
<dbReference type="eggNOG" id="COG2912">
    <property type="taxonomic scope" value="Bacteria"/>
</dbReference>
<dbReference type="HOGENOM" id="CLU_063810_0_0_6"/>
<dbReference type="OrthoDB" id="232498at2"/>
<dbReference type="Proteomes" id="UP000000601">
    <property type="component" value="Chromosome"/>
</dbReference>
<dbReference type="InterPro" id="IPR032698">
    <property type="entry name" value="SirB1_N"/>
</dbReference>
<dbReference type="InterPro" id="IPR011990">
    <property type="entry name" value="TPR-like_helical_dom_sf"/>
</dbReference>
<dbReference type="NCBIfam" id="NF008188">
    <property type="entry name" value="PRK10941.1"/>
    <property type="match status" value="1"/>
</dbReference>
<dbReference type="Pfam" id="PF13371">
    <property type="entry name" value="TPR_9"/>
    <property type="match status" value="1"/>
</dbReference>
<dbReference type="Pfam" id="PF13369">
    <property type="entry name" value="Transglut_core2"/>
    <property type="match status" value="1"/>
</dbReference>
<dbReference type="SUPFAM" id="SSF48452">
    <property type="entry name" value="TPR-like"/>
    <property type="match status" value="1"/>
</dbReference>
<evidence type="ECO:0000305" key="1"/>
<protein>
    <recommendedName>
        <fullName>UPF0162 protein bbp_163</fullName>
    </recommendedName>
</protein>
<feature type="chain" id="PRO_0000202383" description="UPF0162 protein bbp_163">
    <location>
        <begin position="1"/>
        <end position="269"/>
    </location>
</feature>
<reference key="1">
    <citation type="journal article" date="2003" name="Proc. Natl. Acad. Sci. U.S.A.">
        <title>Reductive genome evolution in Buchnera aphidicola.</title>
        <authorList>
            <person name="van Ham R.C.H.J."/>
            <person name="Kamerbeek J."/>
            <person name="Palacios C."/>
            <person name="Rausell C."/>
            <person name="Abascal F."/>
            <person name="Bastolla U."/>
            <person name="Fernandez J.M."/>
            <person name="Jimenez L."/>
            <person name="Postigo M."/>
            <person name="Silva F.J."/>
            <person name="Tamames J."/>
            <person name="Viguera E."/>
            <person name="Latorre A."/>
            <person name="Valencia A."/>
            <person name="Moran F."/>
            <person name="Moya A."/>
        </authorList>
    </citation>
    <scope>NUCLEOTIDE SEQUENCE [LARGE SCALE GENOMIC DNA]</scope>
    <source>
        <strain>Bp</strain>
    </source>
</reference>
<proteinExistence type="inferred from homology"/>
<keyword id="KW-1185">Reference proteome</keyword>
<name>Y163_BUCBP</name>
<sequence>MTYFLNSDFSKLPLCESIIEVSRAIRQDFPSKRVIEDLKHKVEVARNYVVSENLPFLKLRKLIKLFYKNWKFECASGIYKLSDVLWLDHVLKTHKGTAVSLGIIILHIAQQLNLPLMPVIFPTQLILRADNGNGNMWLINPFNGDTLNKHVLKVWLKGNISPTAELYNNYLNKVQYFEVVRKMLDILKSALMEERNLELALNVSNVLLKIDPKNPYEIRDRGLIYSQLECDHVALTDLIYFVEHCPDDPISEILKIQIHSMEKKVITLH</sequence>
<accession>Q89AS9</accession>
<gene>
    <name type="ordered locus">bbp_163</name>
</gene>
<organism>
    <name type="scientific">Buchnera aphidicola subsp. Baizongia pistaciae (strain Bp)</name>
    <dbReference type="NCBI Taxonomy" id="224915"/>
    <lineage>
        <taxon>Bacteria</taxon>
        <taxon>Pseudomonadati</taxon>
        <taxon>Pseudomonadota</taxon>
        <taxon>Gammaproteobacteria</taxon>
        <taxon>Enterobacterales</taxon>
        <taxon>Erwiniaceae</taxon>
        <taxon>Buchnera</taxon>
    </lineage>
</organism>